<keyword id="KW-0044">Antibiotic</keyword>
<keyword id="KW-0929">Antimicrobial</keyword>
<keyword id="KW-0134">Cell wall</keyword>
<keyword id="KW-0903">Direct protein sequencing</keyword>
<keyword id="KW-0295">Fungicide</keyword>
<keyword id="KW-0611">Plant defense</keyword>
<keyword id="KW-1185">Reference proteome</keyword>
<keyword id="KW-0964">Secreted</keyword>
<evidence type="ECO:0000305" key="1"/>
<accession>P81569</accession>
<comment type="function">
    <text>Antimicrobial peptide. Active against Fusarium spp., Gram-positive and Gram-negative bacterial pathogens.</text>
</comment>
<comment type="subcellular location">
    <subcellularLocation>
        <location evidence="1">Secreted</location>
        <location evidence="1">Cell wall</location>
    </subcellularLocation>
</comment>
<comment type="tissue specificity">
    <text>Distributed in the epidermal cell layer of leaves and in the subepidermal layer region of stems. Not in roots.</text>
</comment>
<comment type="developmental stage">
    <text>Present throughout the life of the leaf.</text>
</comment>
<comment type="similarity">
    <text evidence="1">Belongs to the DEFL family. Group IV subfamily.</text>
</comment>
<feature type="chain" id="PRO_0000074254" description="Defensin D4">
    <location>
        <begin position="1"/>
        <end position="23" status="greater than"/>
    </location>
</feature>
<feature type="non-terminal residue" evidence="1">
    <location>
        <position position="23"/>
    </location>
</feature>
<dbReference type="Proteomes" id="UP001155700">
    <property type="component" value="Unplaced"/>
</dbReference>
<dbReference type="GO" id="GO:0005576">
    <property type="term" value="C:extracellular region"/>
    <property type="evidence" value="ECO:0007669"/>
    <property type="project" value="UniProtKB-KW"/>
</dbReference>
<dbReference type="GO" id="GO:0042742">
    <property type="term" value="P:defense response to bacterium"/>
    <property type="evidence" value="ECO:0007669"/>
    <property type="project" value="UniProtKB-KW"/>
</dbReference>
<dbReference type="GO" id="GO:0050832">
    <property type="term" value="P:defense response to fungus"/>
    <property type="evidence" value="ECO:0007669"/>
    <property type="project" value="UniProtKB-KW"/>
</dbReference>
<dbReference type="GO" id="GO:0031640">
    <property type="term" value="P:killing of cells of another organism"/>
    <property type="evidence" value="ECO:0007669"/>
    <property type="project" value="UniProtKB-KW"/>
</dbReference>
<proteinExistence type="evidence at protein level"/>
<sequence length="23" mass="2623">MFFSSKKCKTVSKTFRGPCVRNA</sequence>
<name>DEFD4_SPIOL</name>
<organism evidence="1">
    <name type="scientific">Spinacia oleracea</name>
    <name type="common">Spinach</name>
    <dbReference type="NCBI Taxonomy" id="3562"/>
    <lineage>
        <taxon>Eukaryota</taxon>
        <taxon>Viridiplantae</taxon>
        <taxon>Streptophyta</taxon>
        <taxon>Embryophyta</taxon>
        <taxon>Tracheophyta</taxon>
        <taxon>Spermatophyta</taxon>
        <taxon>Magnoliopsida</taxon>
        <taxon>eudicotyledons</taxon>
        <taxon>Gunneridae</taxon>
        <taxon>Pentapetalae</taxon>
        <taxon>Caryophyllales</taxon>
        <taxon>Chenopodiaceae</taxon>
        <taxon>Chenopodioideae</taxon>
        <taxon>Anserineae</taxon>
        <taxon>Spinacia</taxon>
    </lineage>
</organism>
<protein>
    <recommendedName>
        <fullName>Defensin D4</fullName>
    </recommendedName>
    <alternativeName>
        <fullName>Antimicrobial peptide D4</fullName>
    </alternativeName>
    <alternativeName>
        <fullName>So-D4</fullName>
    </alternativeName>
</protein>
<reference evidence="1" key="1">
    <citation type="journal article" date="1998" name="FEBS Lett.">
        <title>Novel defensin subfamily from spinach (Spinacia oleracea).</title>
        <authorList>
            <person name="Segura A."/>
            <person name="Moreno M."/>
            <person name="Molina A."/>
            <person name="Garcia-Olmedo F."/>
        </authorList>
    </citation>
    <scope>PROTEIN SEQUENCE</scope>
    <source>
        <strain>cv. Matador</strain>
        <tissue>Leaf</tissue>
    </source>
</reference>